<reference key="1">
    <citation type="submission" date="1999-12" db="EMBL/GenBank/DDBJ databases">
        <title>The flavoprotein subunit 1 of Dictyostelium succinate dehydrogenase.</title>
        <authorList>
            <person name="Lay S.P."/>
            <person name="Fisher P.R."/>
        </authorList>
    </citation>
    <scope>NUCLEOTIDE SEQUENCE [GENOMIC DNA]</scope>
    <source>
        <strain>AX2</strain>
    </source>
</reference>
<reference key="2">
    <citation type="journal article" date="2005" name="Nature">
        <title>The genome of the social amoeba Dictyostelium discoideum.</title>
        <authorList>
            <person name="Eichinger L."/>
            <person name="Pachebat J.A."/>
            <person name="Gloeckner G."/>
            <person name="Rajandream M.A."/>
            <person name="Sucgang R."/>
            <person name="Berriman M."/>
            <person name="Song J."/>
            <person name="Olsen R."/>
            <person name="Szafranski K."/>
            <person name="Xu Q."/>
            <person name="Tunggal B."/>
            <person name="Kummerfeld S."/>
            <person name="Madera M."/>
            <person name="Konfortov B.A."/>
            <person name="Rivero F."/>
            <person name="Bankier A.T."/>
            <person name="Lehmann R."/>
            <person name="Hamlin N."/>
            <person name="Davies R."/>
            <person name="Gaudet P."/>
            <person name="Fey P."/>
            <person name="Pilcher K."/>
            <person name="Chen G."/>
            <person name="Saunders D."/>
            <person name="Sodergren E.J."/>
            <person name="Davis P."/>
            <person name="Kerhornou A."/>
            <person name="Nie X."/>
            <person name="Hall N."/>
            <person name="Anjard C."/>
            <person name="Hemphill L."/>
            <person name="Bason N."/>
            <person name="Farbrother P."/>
            <person name="Desany B."/>
            <person name="Just E."/>
            <person name="Morio T."/>
            <person name="Rost R."/>
            <person name="Churcher C.M."/>
            <person name="Cooper J."/>
            <person name="Haydock S."/>
            <person name="van Driessche N."/>
            <person name="Cronin A."/>
            <person name="Goodhead I."/>
            <person name="Muzny D.M."/>
            <person name="Mourier T."/>
            <person name="Pain A."/>
            <person name="Lu M."/>
            <person name="Harper D."/>
            <person name="Lindsay R."/>
            <person name="Hauser H."/>
            <person name="James K.D."/>
            <person name="Quiles M."/>
            <person name="Madan Babu M."/>
            <person name="Saito T."/>
            <person name="Buchrieser C."/>
            <person name="Wardroper A."/>
            <person name="Felder M."/>
            <person name="Thangavelu M."/>
            <person name="Johnson D."/>
            <person name="Knights A."/>
            <person name="Loulseged H."/>
            <person name="Mungall K.L."/>
            <person name="Oliver K."/>
            <person name="Price C."/>
            <person name="Quail M.A."/>
            <person name="Urushihara H."/>
            <person name="Hernandez J."/>
            <person name="Rabbinowitsch E."/>
            <person name="Steffen D."/>
            <person name="Sanders M."/>
            <person name="Ma J."/>
            <person name="Kohara Y."/>
            <person name="Sharp S."/>
            <person name="Simmonds M.N."/>
            <person name="Spiegler S."/>
            <person name="Tivey A."/>
            <person name="Sugano S."/>
            <person name="White B."/>
            <person name="Walker D."/>
            <person name="Woodward J.R."/>
            <person name="Winckler T."/>
            <person name="Tanaka Y."/>
            <person name="Shaulsky G."/>
            <person name="Schleicher M."/>
            <person name="Weinstock G.M."/>
            <person name="Rosenthal A."/>
            <person name="Cox E.C."/>
            <person name="Chisholm R.L."/>
            <person name="Gibbs R.A."/>
            <person name="Loomis W.F."/>
            <person name="Platzer M."/>
            <person name="Kay R.R."/>
            <person name="Williams J.G."/>
            <person name="Dear P.H."/>
            <person name="Noegel A.A."/>
            <person name="Barrell B.G."/>
            <person name="Kuspa A."/>
        </authorList>
    </citation>
    <scope>NUCLEOTIDE SEQUENCE [LARGE SCALE GENOMIC DNA]</scope>
    <source>
        <strain>AX4</strain>
    </source>
</reference>
<keyword id="KW-0249">Electron transport</keyword>
<keyword id="KW-0274">FAD</keyword>
<keyword id="KW-0285">Flavoprotein</keyword>
<keyword id="KW-0472">Membrane</keyword>
<keyword id="KW-0496">Mitochondrion</keyword>
<keyword id="KW-0999">Mitochondrion inner membrane</keyword>
<keyword id="KW-0560">Oxidoreductase</keyword>
<keyword id="KW-1185">Reference proteome</keyword>
<keyword id="KW-0809">Transit peptide</keyword>
<keyword id="KW-0813">Transport</keyword>
<keyword id="KW-0816">Tricarboxylic acid cycle</keyword>
<name>SDHA_DICDI</name>
<accession>Q9U3X4</accession>
<accession>Q54V62</accession>
<gene>
    <name type="primary">sdhA</name>
    <name type="ORF">DDB_G0280535</name>
</gene>
<organism>
    <name type="scientific">Dictyostelium discoideum</name>
    <name type="common">Social amoeba</name>
    <dbReference type="NCBI Taxonomy" id="44689"/>
    <lineage>
        <taxon>Eukaryota</taxon>
        <taxon>Amoebozoa</taxon>
        <taxon>Evosea</taxon>
        <taxon>Eumycetozoa</taxon>
        <taxon>Dictyostelia</taxon>
        <taxon>Dictyosteliales</taxon>
        <taxon>Dictyosteliaceae</taxon>
        <taxon>Dictyostelium</taxon>
    </lineage>
</organism>
<sequence length="626" mass="68516">MLSSALKLTKKVCSTKSNGLIRSFSTQTQSRDYAVVDHTYDAIVVGAGGAGLRAALGLTEKGYKTACITKLFPTRSHTVAAQGGINAALGNADQDDWRWHAYDTVKGSDFLGDQDAIHYMCKEAVPTVLELEQYGVPFSRMDDGRIYQRAFGGQSKNFGKGGQATRCCAAADRTGHALLHTLYGQAVKHNTKFFIEYFVTDLIMENGDCRGVVAINLEDGTIHRFRSHATVIATGGYGRAYFSATSAHTCTGDGNAMVIRAGLPCQDLEFVQFHPTGIYGSGCLITEGARGEGGYLLNSSGERFMPRYAPSVADLASRDVVSRSETMEIREGRGVGPEKDHCLLNLTHLSPEIIDERLPGIRETAMIFAGVDVTKEPIPVIPTVHYNMGGIPTNYKGQVITQVDGKDKLVKGLYAAGESACVSVHGANRLGANSLLDIVVFGRAVANEIENTLAKDTPHKPLPPNAGEESIANIDAIRFSNGTRSTAEIRLEMQKIMQRNAAVFRDGQVLKEGVELIDKCARSLINDLKTTDRTMIWNTDLIESLELQNLMTQAVLTMHSAEARKESRGAHAREDYKERDDANWMKHTLSYLDVNTGKVTLNYRPVVSETLDQSEMETIKPFKRVY</sequence>
<evidence type="ECO:0000250" key="1">
    <source>
        <dbReference type="UniProtKB" id="P31040"/>
    </source>
</evidence>
<evidence type="ECO:0000250" key="2">
    <source>
        <dbReference type="UniProtKB" id="Q0QF01"/>
    </source>
</evidence>
<evidence type="ECO:0000250" key="3">
    <source>
        <dbReference type="UniProtKB" id="Q9YHT1"/>
    </source>
</evidence>
<evidence type="ECO:0000255" key="4"/>
<evidence type="ECO:0000305" key="5"/>
<dbReference type="EC" id="1.3.5.1" evidence="1"/>
<dbReference type="EMBL" id="AF211482">
    <property type="protein sequence ID" value="AAF21045.1"/>
    <property type="molecule type" value="Genomic_DNA"/>
</dbReference>
<dbReference type="EMBL" id="AAFI02000037">
    <property type="protein sequence ID" value="EAL67069.1"/>
    <property type="molecule type" value="Genomic_DNA"/>
</dbReference>
<dbReference type="RefSeq" id="XP_641069.1">
    <property type="nucleotide sequence ID" value="XM_635977.1"/>
</dbReference>
<dbReference type="SMR" id="Q9U3X4"/>
<dbReference type="FunCoup" id="Q9U3X4">
    <property type="interactions" value="491"/>
</dbReference>
<dbReference type="STRING" id="44689.Q9U3X4"/>
<dbReference type="PaxDb" id="44689-DDB0214886"/>
<dbReference type="EnsemblProtists" id="EAL67069">
    <property type="protein sequence ID" value="EAL67069"/>
    <property type="gene ID" value="DDB_G0280535"/>
</dbReference>
<dbReference type="GeneID" id="8622627"/>
<dbReference type="KEGG" id="ddi:DDB_G0280535"/>
<dbReference type="dictyBase" id="DDB_G0280535">
    <property type="gene designation" value="sdhA"/>
</dbReference>
<dbReference type="VEuPathDB" id="AmoebaDB:DDB_G0280535"/>
<dbReference type="eggNOG" id="KOG2403">
    <property type="taxonomic scope" value="Eukaryota"/>
</dbReference>
<dbReference type="HOGENOM" id="CLU_014312_6_1_1"/>
<dbReference type="InParanoid" id="Q9U3X4"/>
<dbReference type="OMA" id="PTGIWRM"/>
<dbReference type="PhylomeDB" id="Q9U3X4"/>
<dbReference type="Reactome" id="R-DDI-71403">
    <property type="pathway name" value="Citric acid cycle (TCA cycle)"/>
</dbReference>
<dbReference type="Reactome" id="R-DDI-9854311">
    <property type="pathway name" value="Maturation of TCA enzymes and regulation of TCA cycle"/>
</dbReference>
<dbReference type="UniPathway" id="UPA00223">
    <property type="reaction ID" value="UER01006"/>
</dbReference>
<dbReference type="PRO" id="PR:Q9U3X4"/>
<dbReference type="Proteomes" id="UP000002195">
    <property type="component" value="Chromosome 3"/>
</dbReference>
<dbReference type="GO" id="GO:0005743">
    <property type="term" value="C:mitochondrial inner membrane"/>
    <property type="evidence" value="ECO:0007669"/>
    <property type="project" value="UniProtKB-SubCell"/>
</dbReference>
<dbReference type="GO" id="GO:0005739">
    <property type="term" value="C:mitochondrion"/>
    <property type="evidence" value="ECO:0000250"/>
    <property type="project" value="dictyBase"/>
</dbReference>
<dbReference type="GO" id="GO:0045335">
    <property type="term" value="C:phagocytic vesicle"/>
    <property type="evidence" value="ECO:0007005"/>
    <property type="project" value="dictyBase"/>
</dbReference>
<dbReference type="GO" id="GO:0045273">
    <property type="term" value="C:respiratory chain complex II (succinate dehydrogenase)"/>
    <property type="evidence" value="ECO:0000250"/>
    <property type="project" value="dictyBase"/>
</dbReference>
<dbReference type="GO" id="GO:0009055">
    <property type="term" value="F:electron transfer activity"/>
    <property type="evidence" value="ECO:0000318"/>
    <property type="project" value="GO_Central"/>
</dbReference>
<dbReference type="GO" id="GO:0050660">
    <property type="term" value="F:flavin adenine dinucleotide binding"/>
    <property type="evidence" value="ECO:0000318"/>
    <property type="project" value="GO_Central"/>
</dbReference>
<dbReference type="GO" id="GO:0008177">
    <property type="term" value="F:succinate dehydrogenase (quinone) activity"/>
    <property type="evidence" value="ECO:0000315"/>
    <property type="project" value="dictyBase"/>
</dbReference>
<dbReference type="GO" id="GO:0050829">
    <property type="term" value="P:defense response to Gram-negative bacterium"/>
    <property type="evidence" value="ECO:0000315"/>
    <property type="project" value="dictyBase"/>
</dbReference>
<dbReference type="GO" id="GO:0006121">
    <property type="term" value="P:mitochondrial electron transport, succinate to ubiquinone"/>
    <property type="evidence" value="ECO:0000250"/>
    <property type="project" value="dictyBase"/>
</dbReference>
<dbReference type="GO" id="GO:0007005">
    <property type="term" value="P:mitochondrion organization"/>
    <property type="evidence" value="ECO:0000315"/>
    <property type="project" value="dictyBase"/>
</dbReference>
<dbReference type="GO" id="GO:0006909">
    <property type="term" value="P:phagocytosis"/>
    <property type="evidence" value="ECO:0000315"/>
    <property type="project" value="dictyBase"/>
</dbReference>
<dbReference type="GO" id="GO:0046956">
    <property type="term" value="P:positive phototaxis"/>
    <property type="evidence" value="ECO:0000315"/>
    <property type="project" value="dictyBase"/>
</dbReference>
<dbReference type="GO" id="GO:0006099">
    <property type="term" value="P:tricarboxylic acid cycle"/>
    <property type="evidence" value="ECO:0007669"/>
    <property type="project" value="UniProtKB-UniPathway"/>
</dbReference>
<dbReference type="FunFam" id="3.90.700.10:FF:000001">
    <property type="entry name" value="Mitochondrial succinate dehydrogenase flavoprotein subunit"/>
    <property type="match status" value="1"/>
</dbReference>
<dbReference type="FunFam" id="4.10.80.40:FF:000002">
    <property type="entry name" value="Succinate dehydrogenase [ubiquinone] flavoprotein subunit, mitochondrial"/>
    <property type="match status" value="1"/>
</dbReference>
<dbReference type="FunFam" id="3.50.50.60:FF:001062">
    <property type="entry name" value="Succinate dehydrogenase complex, subunit A, flavoprotein (Fp)"/>
    <property type="match status" value="1"/>
</dbReference>
<dbReference type="FunFam" id="3.50.50.60:FF:000026">
    <property type="entry name" value="Succinate dehydrogenase flavoprotein subunit"/>
    <property type="match status" value="1"/>
</dbReference>
<dbReference type="FunFam" id="1.20.58.100:FF:000001">
    <property type="entry name" value="Succinate dehydrogenase flavoprotein subunit (SdhA)"/>
    <property type="match status" value="1"/>
</dbReference>
<dbReference type="Gene3D" id="3.50.50.60">
    <property type="entry name" value="FAD/NAD(P)-binding domain"/>
    <property type="match status" value="1"/>
</dbReference>
<dbReference type="Gene3D" id="1.20.58.100">
    <property type="entry name" value="Fumarate reductase/succinate dehydrogenase flavoprotein-like, C-terminal domain"/>
    <property type="match status" value="1"/>
</dbReference>
<dbReference type="Gene3D" id="4.10.80.40">
    <property type="entry name" value="succinate dehydrogenase protein domain"/>
    <property type="match status" value="1"/>
</dbReference>
<dbReference type="Gene3D" id="3.90.700.10">
    <property type="entry name" value="Succinate dehydrogenase/fumarate reductase flavoprotein, catalytic domain"/>
    <property type="match status" value="1"/>
</dbReference>
<dbReference type="InterPro" id="IPR003953">
    <property type="entry name" value="FAD-dep_OxRdtase_2_FAD-bd"/>
</dbReference>
<dbReference type="InterPro" id="IPR036188">
    <property type="entry name" value="FAD/NAD-bd_sf"/>
</dbReference>
<dbReference type="InterPro" id="IPR003952">
    <property type="entry name" value="FRD_SDH_FAD_BS"/>
</dbReference>
<dbReference type="InterPro" id="IPR037099">
    <property type="entry name" value="Fum_R/Succ_DH_flav-like_C_sf"/>
</dbReference>
<dbReference type="InterPro" id="IPR015939">
    <property type="entry name" value="Fum_Rdtase/Succ_DH_flav-like_C"/>
</dbReference>
<dbReference type="InterPro" id="IPR030664">
    <property type="entry name" value="SdhA/FrdA/AprA"/>
</dbReference>
<dbReference type="InterPro" id="IPR027477">
    <property type="entry name" value="Succ_DH/fumarate_Rdtase_cat_sf"/>
</dbReference>
<dbReference type="InterPro" id="IPR011281">
    <property type="entry name" value="Succ_DH_flav_su_fwd"/>
</dbReference>
<dbReference type="InterPro" id="IPR014006">
    <property type="entry name" value="Succ_Dhase_FrdA_Gneg"/>
</dbReference>
<dbReference type="NCBIfam" id="TIGR01816">
    <property type="entry name" value="sdhA_forward"/>
    <property type="match status" value="1"/>
</dbReference>
<dbReference type="NCBIfam" id="TIGR01812">
    <property type="entry name" value="sdhA_frdA_Gneg"/>
    <property type="match status" value="1"/>
</dbReference>
<dbReference type="PANTHER" id="PTHR11632">
    <property type="entry name" value="SUCCINATE DEHYDROGENASE 2 FLAVOPROTEIN SUBUNIT"/>
    <property type="match status" value="1"/>
</dbReference>
<dbReference type="PANTHER" id="PTHR11632:SF51">
    <property type="entry name" value="SUCCINATE DEHYDROGENASE [UBIQUINONE] FLAVOPROTEIN SUBUNIT, MITOCHONDRIAL"/>
    <property type="match status" value="1"/>
</dbReference>
<dbReference type="Pfam" id="PF00890">
    <property type="entry name" value="FAD_binding_2"/>
    <property type="match status" value="1"/>
</dbReference>
<dbReference type="Pfam" id="PF02910">
    <property type="entry name" value="Succ_DH_flav_C"/>
    <property type="match status" value="1"/>
</dbReference>
<dbReference type="PIRSF" id="PIRSF000171">
    <property type="entry name" value="SDHA_APRA_LASPO"/>
    <property type="match status" value="1"/>
</dbReference>
<dbReference type="SUPFAM" id="SSF51905">
    <property type="entry name" value="FAD/NAD(P)-binding domain"/>
    <property type="match status" value="1"/>
</dbReference>
<dbReference type="SUPFAM" id="SSF46977">
    <property type="entry name" value="Succinate dehydrogenase/fumarate reductase flavoprotein C-terminal domain"/>
    <property type="match status" value="1"/>
</dbReference>
<dbReference type="SUPFAM" id="SSF56425">
    <property type="entry name" value="Succinate dehydrogenase/fumarate reductase flavoprotein, catalytic domain"/>
    <property type="match status" value="1"/>
</dbReference>
<dbReference type="PROSITE" id="PS00504">
    <property type="entry name" value="FRD_SDH_FAD_BINDING"/>
    <property type="match status" value="1"/>
</dbReference>
<protein>
    <recommendedName>
        <fullName>Succinate dehydrogenase [ubiquinone] flavoprotein subunit, mitochondrial</fullName>
        <ecNumber evidence="1">1.3.5.1</ecNumber>
    </recommendedName>
    <alternativeName>
        <fullName>Flavoprotein subunit of complex II</fullName>
        <shortName>FP</shortName>
    </alternativeName>
</protein>
<comment type="function">
    <text evidence="1">Flavoprotein (FP) subunit of succinate dehydrogenase (SDH) that is involved in complex II of the mitochondrial electron transport chain and is responsible for transferring electrons from succinate to ubiquinone (coenzyme Q).</text>
</comment>
<comment type="catalytic activity">
    <reaction evidence="1">
        <text>a quinone + succinate = fumarate + a quinol</text>
        <dbReference type="Rhea" id="RHEA:40523"/>
        <dbReference type="ChEBI" id="CHEBI:24646"/>
        <dbReference type="ChEBI" id="CHEBI:29806"/>
        <dbReference type="ChEBI" id="CHEBI:30031"/>
        <dbReference type="ChEBI" id="CHEBI:132124"/>
        <dbReference type="EC" id="1.3.5.1"/>
    </reaction>
</comment>
<comment type="cofactor">
    <cofactor evidence="2">
        <name>FAD</name>
        <dbReference type="ChEBI" id="CHEBI:57692"/>
    </cofactor>
</comment>
<comment type="pathway">
    <text evidence="1">Carbohydrate metabolism; tricarboxylic acid cycle; fumarate from succinate (eukaryal route): step 1/1.</text>
</comment>
<comment type="subunit">
    <text evidence="2">Component of complex II composed of four subunits: a flavoprotein (FP), an iron-sulfur protein (IP), and a cytochrome b composed of a large and a small subunit.</text>
</comment>
<comment type="subcellular location">
    <subcellularLocation>
        <location evidence="2">Mitochondrion inner membrane</location>
        <topology evidence="2">Peripheral membrane protein</topology>
        <orientation evidence="2">Matrix side</orientation>
    </subcellularLocation>
</comment>
<comment type="similarity">
    <text evidence="5">Belongs to the FAD-dependent oxidoreductase 2 family. FRD/SDH subfamily.</text>
</comment>
<proteinExistence type="inferred from homology"/>
<feature type="transit peptide" description="Mitochondrion" evidence="4">
    <location>
        <begin position="1"/>
        <end position="24"/>
    </location>
</feature>
<feature type="chain" id="PRO_0000327828" description="Succinate dehydrogenase [ubiquinone] flavoprotein subunit, mitochondrial">
    <location>
        <begin position="25"/>
        <end position="626"/>
    </location>
</feature>
<feature type="active site" description="Proton acceptor" evidence="3">
    <location>
        <position position="318"/>
    </location>
</feature>
<feature type="binding site" evidence="3">
    <location>
        <begin position="46"/>
        <end position="51"/>
    </location>
    <ligand>
        <name>FAD</name>
        <dbReference type="ChEBI" id="CHEBI:57692"/>
    </ligand>
</feature>
<feature type="binding site" evidence="3">
    <location>
        <begin position="69"/>
        <end position="84"/>
    </location>
    <ligand>
        <name>FAD</name>
        <dbReference type="ChEBI" id="CHEBI:57692"/>
    </ligand>
</feature>
<feature type="binding site" evidence="3">
    <location>
        <position position="253"/>
    </location>
    <ligand>
        <name>FAD</name>
        <dbReference type="ChEBI" id="CHEBI:57692"/>
    </ligand>
</feature>
<feature type="binding site" evidence="3">
    <location>
        <position position="274"/>
    </location>
    <ligand>
        <name>substrate</name>
    </ligand>
</feature>
<feature type="binding site" evidence="3">
    <location>
        <position position="286"/>
    </location>
    <ligand>
        <name>substrate</name>
    </ligand>
</feature>
<feature type="binding site" evidence="3">
    <location>
        <position position="385"/>
    </location>
    <ligand>
        <name>substrate</name>
    </ligand>
</feature>
<feature type="binding site" evidence="3">
    <location>
        <position position="418"/>
    </location>
    <ligand>
        <name>FAD</name>
        <dbReference type="ChEBI" id="CHEBI:57692"/>
    </ligand>
</feature>
<feature type="binding site" evidence="3">
    <location>
        <position position="429"/>
    </location>
    <ligand>
        <name>substrate</name>
    </ligand>
</feature>
<feature type="binding site" evidence="3">
    <location>
        <begin position="434"/>
        <end position="435"/>
    </location>
    <ligand>
        <name>FAD</name>
        <dbReference type="ChEBI" id="CHEBI:57692"/>
    </ligand>
</feature>
<feature type="modified residue" description="Tele-8alpha-FAD histidine" evidence="3">
    <location>
        <position position="77"/>
    </location>
</feature>